<proteinExistence type="inferred from homology"/>
<sequence>MAVQKNKPTRSKRGMRRSHDSLTAPHLSIDKFSGETHIRHHITNNGYYKGKKVI</sequence>
<organism>
    <name type="scientific">Buchnera aphidicola subsp. Acyrthosiphon pisum (strain Tuc7)</name>
    <dbReference type="NCBI Taxonomy" id="561501"/>
    <lineage>
        <taxon>Bacteria</taxon>
        <taxon>Pseudomonadati</taxon>
        <taxon>Pseudomonadota</taxon>
        <taxon>Gammaproteobacteria</taxon>
        <taxon>Enterobacterales</taxon>
        <taxon>Erwiniaceae</taxon>
        <taxon>Buchnera</taxon>
    </lineage>
</organism>
<protein>
    <recommendedName>
        <fullName evidence="1">Large ribosomal subunit protein bL32</fullName>
    </recommendedName>
    <alternativeName>
        <fullName evidence="3">50S ribosomal protein L32</fullName>
    </alternativeName>
</protein>
<dbReference type="EMBL" id="CP001158">
    <property type="protein sequence ID" value="ACL30152.1"/>
    <property type="molecule type" value="Genomic_DNA"/>
</dbReference>
<dbReference type="RefSeq" id="WP_009874304.1">
    <property type="nucleotide sequence ID" value="NC_011834.1"/>
</dbReference>
<dbReference type="SMR" id="B8D7N7"/>
<dbReference type="KEGG" id="bau:BUAPTUC7_344"/>
<dbReference type="HOGENOM" id="CLU_129084_2_1_6"/>
<dbReference type="GO" id="GO:0015934">
    <property type="term" value="C:large ribosomal subunit"/>
    <property type="evidence" value="ECO:0007669"/>
    <property type="project" value="InterPro"/>
</dbReference>
<dbReference type="GO" id="GO:0003735">
    <property type="term" value="F:structural constituent of ribosome"/>
    <property type="evidence" value="ECO:0007669"/>
    <property type="project" value="InterPro"/>
</dbReference>
<dbReference type="GO" id="GO:0006412">
    <property type="term" value="P:translation"/>
    <property type="evidence" value="ECO:0007669"/>
    <property type="project" value="UniProtKB-UniRule"/>
</dbReference>
<dbReference type="HAMAP" id="MF_00340">
    <property type="entry name" value="Ribosomal_bL32"/>
    <property type="match status" value="1"/>
</dbReference>
<dbReference type="InterPro" id="IPR002677">
    <property type="entry name" value="Ribosomal_bL32"/>
</dbReference>
<dbReference type="InterPro" id="IPR044957">
    <property type="entry name" value="Ribosomal_bL32_bact"/>
</dbReference>
<dbReference type="InterPro" id="IPR011332">
    <property type="entry name" value="Ribosomal_zn-bd"/>
</dbReference>
<dbReference type="NCBIfam" id="TIGR01031">
    <property type="entry name" value="rpmF_bact"/>
    <property type="match status" value="1"/>
</dbReference>
<dbReference type="PANTHER" id="PTHR35534">
    <property type="entry name" value="50S RIBOSOMAL PROTEIN L32"/>
    <property type="match status" value="1"/>
</dbReference>
<dbReference type="PANTHER" id="PTHR35534:SF1">
    <property type="entry name" value="LARGE RIBOSOMAL SUBUNIT PROTEIN BL32"/>
    <property type="match status" value="1"/>
</dbReference>
<dbReference type="Pfam" id="PF01783">
    <property type="entry name" value="Ribosomal_L32p"/>
    <property type="match status" value="1"/>
</dbReference>
<dbReference type="SUPFAM" id="SSF57829">
    <property type="entry name" value="Zn-binding ribosomal proteins"/>
    <property type="match status" value="1"/>
</dbReference>
<gene>
    <name evidence="1" type="primary">rpmF</name>
    <name type="ordered locus">BUAPTUC7_344</name>
</gene>
<name>RL32_BUCAT</name>
<reference key="1">
    <citation type="journal article" date="2009" name="Science">
        <title>The dynamics and time scale of ongoing genomic erosion in symbiotic bacteria.</title>
        <authorList>
            <person name="Moran N.A."/>
            <person name="McLaughlin H.J."/>
            <person name="Sorek R."/>
        </authorList>
    </citation>
    <scope>NUCLEOTIDE SEQUENCE [LARGE SCALE GENOMIC DNA]</scope>
    <source>
        <strain>Tuc7</strain>
    </source>
</reference>
<comment type="similarity">
    <text evidence="1">Belongs to the bacterial ribosomal protein bL32 family.</text>
</comment>
<evidence type="ECO:0000255" key="1">
    <source>
        <dbReference type="HAMAP-Rule" id="MF_00340"/>
    </source>
</evidence>
<evidence type="ECO:0000256" key="2">
    <source>
        <dbReference type="SAM" id="MobiDB-lite"/>
    </source>
</evidence>
<evidence type="ECO:0000305" key="3"/>
<keyword id="KW-0687">Ribonucleoprotein</keyword>
<keyword id="KW-0689">Ribosomal protein</keyword>
<feature type="chain" id="PRO_1000195965" description="Large ribosomal subunit protein bL32">
    <location>
        <begin position="1"/>
        <end position="54"/>
    </location>
</feature>
<feature type="region of interest" description="Disordered" evidence="2">
    <location>
        <begin position="1"/>
        <end position="26"/>
    </location>
</feature>
<feature type="compositionally biased region" description="Basic residues" evidence="2">
    <location>
        <begin position="7"/>
        <end position="16"/>
    </location>
</feature>
<accession>B8D7N7</accession>